<comment type="function">
    <text evidence="1">Hydrolyzes ribosome-free peptidyl-tRNAs (with 1 or more amino acids incorporated), which drop off the ribosome during protein synthesis, or as a result of ribosome stalling.</text>
</comment>
<comment type="function">
    <text evidence="1">Catalyzes the release of premature peptidyl moieties from peptidyl-tRNA molecules trapped in stalled 50S ribosomal subunits, and thus maintains levels of free tRNAs and 50S ribosomes.</text>
</comment>
<comment type="catalytic activity">
    <reaction evidence="1">
        <text>an N-acyl-L-alpha-aminoacyl-tRNA + H2O = an N-acyl-L-amino acid + a tRNA + H(+)</text>
        <dbReference type="Rhea" id="RHEA:54448"/>
        <dbReference type="Rhea" id="RHEA-COMP:10123"/>
        <dbReference type="Rhea" id="RHEA-COMP:13883"/>
        <dbReference type="ChEBI" id="CHEBI:15377"/>
        <dbReference type="ChEBI" id="CHEBI:15378"/>
        <dbReference type="ChEBI" id="CHEBI:59874"/>
        <dbReference type="ChEBI" id="CHEBI:78442"/>
        <dbReference type="ChEBI" id="CHEBI:138191"/>
        <dbReference type="EC" id="3.1.1.29"/>
    </reaction>
</comment>
<comment type="subunit">
    <text evidence="1">Monomer.</text>
</comment>
<comment type="subcellular location">
    <subcellularLocation>
        <location evidence="1">Cytoplasm</location>
    </subcellularLocation>
</comment>
<comment type="similarity">
    <text evidence="1">Belongs to the PTH family.</text>
</comment>
<keyword id="KW-0963">Cytoplasm</keyword>
<keyword id="KW-0378">Hydrolase</keyword>
<keyword id="KW-1185">Reference proteome</keyword>
<keyword id="KW-0694">RNA-binding</keyword>
<keyword id="KW-0820">tRNA-binding</keyword>
<gene>
    <name evidence="1" type="primary">pth</name>
    <name type="ordered locus">ATP_00223</name>
</gene>
<dbReference type="EC" id="3.1.1.29" evidence="1"/>
<dbReference type="EMBL" id="CU469464">
    <property type="protein sequence ID" value="CAP18410.1"/>
    <property type="molecule type" value="Genomic_DNA"/>
</dbReference>
<dbReference type="SMR" id="B3QZM3"/>
<dbReference type="STRING" id="37692.ATP_00223"/>
<dbReference type="KEGG" id="pml:ATP_00223"/>
<dbReference type="eggNOG" id="COG0193">
    <property type="taxonomic scope" value="Bacteria"/>
</dbReference>
<dbReference type="HOGENOM" id="CLU_062456_4_1_14"/>
<dbReference type="Proteomes" id="UP000002020">
    <property type="component" value="Chromosome"/>
</dbReference>
<dbReference type="GO" id="GO:0005737">
    <property type="term" value="C:cytoplasm"/>
    <property type="evidence" value="ECO:0007669"/>
    <property type="project" value="UniProtKB-SubCell"/>
</dbReference>
<dbReference type="GO" id="GO:0004045">
    <property type="term" value="F:peptidyl-tRNA hydrolase activity"/>
    <property type="evidence" value="ECO:0007669"/>
    <property type="project" value="UniProtKB-UniRule"/>
</dbReference>
<dbReference type="GO" id="GO:0000049">
    <property type="term" value="F:tRNA binding"/>
    <property type="evidence" value="ECO:0007669"/>
    <property type="project" value="UniProtKB-UniRule"/>
</dbReference>
<dbReference type="GO" id="GO:0006515">
    <property type="term" value="P:protein quality control for misfolded or incompletely synthesized proteins"/>
    <property type="evidence" value="ECO:0007669"/>
    <property type="project" value="UniProtKB-UniRule"/>
</dbReference>
<dbReference type="GO" id="GO:0072344">
    <property type="term" value="P:rescue of stalled ribosome"/>
    <property type="evidence" value="ECO:0007669"/>
    <property type="project" value="UniProtKB-UniRule"/>
</dbReference>
<dbReference type="CDD" id="cd00462">
    <property type="entry name" value="PTH"/>
    <property type="match status" value="1"/>
</dbReference>
<dbReference type="Gene3D" id="3.40.50.1470">
    <property type="entry name" value="Peptidyl-tRNA hydrolase"/>
    <property type="match status" value="1"/>
</dbReference>
<dbReference type="HAMAP" id="MF_00083">
    <property type="entry name" value="Pept_tRNA_hydro_bact"/>
    <property type="match status" value="1"/>
</dbReference>
<dbReference type="InterPro" id="IPR001328">
    <property type="entry name" value="Pept_tRNA_hydro"/>
</dbReference>
<dbReference type="InterPro" id="IPR018171">
    <property type="entry name" value="Pept_tRNA_hydro_CS"/>
</dbReference>
<dbReference type="InterPro" id="IPR036416">
    <property type="entry name" value="Pept_tRNA_hydro_sf"/>
</dbReference>
<dbReference type="NCBIfam" id="TIGR00447">
    <property type="entry name" value="pth"/>
    <property type="match status" value="1"/>
</dbReference>
<dbReference type="PANTHER" id="PTHR17224">
    <property type="entry name" value="PEPTIDYL-TRNA HYDROLASE"/>
    <property type="match status" value="1"/>
</dbReference>
<dbReference type="PANTHER" id="PTHR17224:SF1">
    <property type="entry name" value="PEPTIDYL-TRNA HYDROLASE"/>
    <property type="match status" value="1"/>
</dbReference>
<dbReference type="Pfam" id="PF01195">
    <property type="entry name" value="Pept_tRNA_hydro"/>
    <property type="match status" value="1"/>
</dbReference>
<dbReference type="SUPFAM" id="SSF53178">
    <property type="entry name" value="Peptidyl-tRNA hydrolase-like"/>
    <property type="match status" value="1"/>
</dbReference>
<dbReference type="PROSITE" id="PS01196">
    <property type="entry name" value="PEPT_TRNA_HYDROL_2"/>
    <property type="match status" value="1"/>
</dbReference>
<name>PTH_PHYMT</name>
<feature type="chain" id="PRO_1000118403" description="Peptidyl-tRNA hydrolase">
    <location>
        <begin position="1"/>
        <end position="176"/>
    </location>
</feature>
<feature type="active site" description="Proton acceptor" evidence="1">
    <location>
        <position position="19"/>
    </location>
</feature>
<feature type="binding site" evidence="1">
    <location>
        <position position="14"/>
    </location>
    <ligand>
        <name>tRNA</name>
        <dbReference type="ChEBI" id="CHEBI:17843"/>
    </ligand>
</feature>
<feature type="binding site" evidence="1">
    <location>
        <position position="65"/>
    </location>
    <ligand>
        <name>tRNA</name>
        <dbReference type="ChEBI" id="CHEBI:17843"/>
    </ligand>
</feature>
<feature type="binding site" evidence="1">
    <location>
        <position position="67"/>
    </location>
    <ligand>
        <name>tRNA</name>
        <dbReference type="ChEBI" id="CHEBI:17843"/>
    </ligand>
</feature>
<feature type="binding site" evidence="1">
    <location>
        <position position="113"/>
    </location>
    <ligand>
        <name>tRNA</name>
        <dbReference type="ChEBI" id="CHEBI:17843"/>
    </ligand>
</feature>
<feature type="site" description="Discriminates between blocked and unblocked aminoacyl-tRNA" evidence="1">
    <location>
        <position position="9"/>
    </location>
</feature>
<feature type="site" description="Stabilizes the basic form of H active site to accept a proton" evidence="1">
    <location>
        <position position="92"/>
    </location>
</feature>
<protein>
    <recommendedName>
        <fullName evidence="1">Peptidyl-tRNA hydrolase</fullName>
        <shortName evidence="1">Pth</shortName>
        <ecNumber evidence="1">3.1.1.29</ecNumber>
    </recommendedName>
</protein>
<sequence length="176" mass="20081">MKLIVGLGNPGQNYQFTLHNIGFMMIDYLLNTIITDKKIVKKHNSYIYKANVGSNLVLFVKPQTYMNSSGHAVKKILNEYKIILNDLLVLSDDIYLPEGNYKLKLKGGHGGHNGLRNIIDCLQTKKFKRLKIGVSQDHNISLEDYLLTPIDDKKKLMVQKSFPIISNIIKNFIQDC</sequence>
<reference key="1">
    <citation type="journal article" date="2008" name="BMC Genomics">
        <title>The linear chromosome of the plant-pathogenic mycoplasma 'Candidatus Phytoplasma mali'.</title>
        <authorList>
            <person name="Kube M."/>
            <person name="Schneider B."/>
            <person name="Kuhl H."/>
            <person name="Dandekar T."/>
            <person name="Heitmann K."/>
            <person name="Migdoll A.M."/>
            <person name="Reinhardt R."/>
            <person name="Seemueller E."/>
        </authorList>
    </citation>
    <scope>NUCLEOTIDE SEQUENCE [LARGE SCALE GENOMIC DNA]</scope>
    <source>
        <strain>AT</strain>
    </source>
</reference>
<proteinExistence type="inferred from homology"/>
<evidence type="ECO:0000255" key="1">
    <source>
        <dbReference type="HAMAP-Rule" id="MF_00083"/>
    </source>
</evidence>
<accession>B3QZM3</accession>
<organism>
    <name type="scientific">Phytoplasma mali (strain AT)</name>
    <dbReference type="NCBI Taxonomy" id="482235"/>
    <lineage>
        <taxon>Bacteria</taxon>
        <taxon>Bacillati</taxon>
        <taxon>Mycoplasmatota</taxon>
        <taxon>Mollicutes</taxon>
        <taxon>Acholeplasmatales</taxon>
        <taxon>Acholeplasmataceae</taxon>
        <taxon>Candidatus Phytoplasma</taxon>
        <taxon>16SrX (Apple proliferation group)</taxon>
    </lineage>
</organism>